<organism>
    <name type="scientific">Saccharomyces cerevisiae (strain ATCC 204508 / S288c)</name>
    <name type="common">Baker's yeast</name>
    <dbReference type="NCBI Taxonomy" id="559292"/>
    <lineage>
        <taxon>Eukaryota</taxon>
        <taxon>Fungi</taxon>
        <taxon>Dikarya</taxon>
        <taxon>Ascomycota</taxon>
        <taxon>Saccharomycotina</taxon>
        <taxon>Saccharomycetes</taxon>
        <taxon>Saccharomycetales</taxon>
        <taxon>Saccharomycetaceae</taxon>
        <taxon>Saccharomyces</taxon>
    </lineage>
</organism>
<keyword id="KW-0256">Endoplasmic reticulum</keyword>
<keyword id="KW-0931">ER-Golgi transport</keyword>
<keyword id="KW-0333">Golgi apparatus</keyword>
<keyword id="KW-0472">Membrane</keyword>
<keyword id="KW-0653">Protein transport</keyword>
<keyword id="KW-1185">Reference proteome</keyword>
<keyword id="KW-0812">Transmembrane</keyword>
<keyword id="KW-1133">Transmembrane helix</keyword>
<keyword id="KW-0813">Transport</keyword>
<feature type="chain" id="PRO_0000232636" description="Protein transport protein YOS1">
    <location>
        <begin position="1"/>
        <end position="85"/>
    </location>
</feature>
<feature type="transmembrane region" description="Helical" evidence="1">
    <location>
        <begin position="2"/>
        <end position="22"/>
    </location>
</feature>
<feature type="transmembrane region" description="Helical" evidence="1">
    <location>
        <begin position="65"/>
        <end position="85"/>
    </location>
</feature>
<feature type="mutagenesis site" description="In YOS1-1; impairs interaction with YIP1, blocks ER-Golgi protein transport, and causes a severe growth defect at 37 degrees Celsius." evidence="2">
    <original>N</original>
    <variation>A</variation>
    <location>
        <position position="18"/>
    </location>
</feature>
<feature type="mutagenesis site" description="Lethal." evidence="2">
    <original>P</original>
    <variation>A</variation>
    <location>
        <position position="69"/>
    </location>
</feature>
<dbReference type="EMBL" id="U18814">
    <property type="status" value="NOT_ANNOTATED_CDS"/>
    <property type="molecule type" value="Genomic_DNA"/>
</dbReference>
<dbReference type="EMBL" id="BK006939">
    <property type="protein sequence ID" value="DAA07734.1"/>
    <property type="molecule type" value="Genomic_DNA"/>
</dbReference>
<dbReference type="RefSeq" id="NP_219496.2">
    <property type="nucleotide sequence ID" value="NM_001184512.1"/>
</dbReference>
<dbReference type="SMR" id="Q3E834"/>
<dbReference type="BioGRID" id="36818">
    <property type="interactions" value="6"/>
</dbReference>
<dbReference type="FunCoup" id="Q3E834">
    <property type="interactions" value="319"/>
</dbReference>
<dbReference type="STRING" id="4932.YER074W-A"/>
<dbReference type="iPTMnet" id="Q3E834"/>
<dbReference type="PaxDb" id="4932-YER074W-A"/>
<dbReference type="PeptideAtlas" id="Q3E834"/>
<dbReference type="TopDownProteomics" id="Q3E834"/>
<dbReference type="EnsemblFungi" id="YER074W-A_mRNA">
    <property type="protein sequence ID" value="YER074W-A"/>
    <property type="gene ID" value="YER074W-A"/>
</dbReference>
<dbReference type="GeneID" id="856806"/>
<dbReference type="KEGG" id="sce:YER074W-A"/>
<dbReference type="AGR" id="SGD:S000007651"/>
<dbReference type="SGD" id="S000007651">
    <property type="gene designation" value="YOS1"/>
</dbReference>
<dbReference type="VEuPathDB" id="FungiDB:YER074W-A"/>
<dbReference type="eggNOG" id="KOG4779">
    <property type="taxonomic scope" value="Eukaryota"/>
</dbReference>
<dbReference type="GeneTree" id="ENSGT00510000047648"/>
<dbReference type="HOGENOM" id="CLU_152125_0_0_1"/>
<dbReference type="InParanoid" id="Q3E834"/>
<dbReference type="OMA" id="VQTVMRM"/>
<dbReference type="OrthoDB" id="15356at2759"/>
<dbReference type="BioCyc" id="YEAST:G3O-30392-MONOMER"/>
<dbReference type="BioGRID-ORCS" id="856806">
    <property type="hits" value="0 hits in 10 CRISPR screens"/>
</dbReference>
<dbReference type="PRO" id="PR:Q3E834"/>
<dbReference type="Proteomes" id="UP000002311">
    <property type="component" value="Chromosome V"/>
</dbReference>
<dbReference type="RNAct" id="Q3E834">
    <property type="molecule type" value="protein"/>
</dbReference>
<dbReference type="GO" id="GO:0030134">
    <property type="term" value="C:COPII-coated ER to Golgi transport vesicle"/>
    <property type="evidence" value="ECO:0000314"/>
    <property type="project" value="SGD"/>
</dbReference>
<dbReference type="GO" id="GO:0005789">
    <property type="term" value="C:endoplasmic reticulum membrane"/>
    <property type="evidence" value="ECO:0000314"/>
    <property type="project" value="SGD"/>
</dbReference>
<dbReference type="GO" id="GO:0000139">
    <property type="term" value="C:Golgi membrane"/>
    <property type="evidence" value="ECO:0000314"/>
    <property type="project" value="SGD"/>
</dbReference>
<dbReference type="GO" id="GO:0006888">
    <property type="term" value="P:endoplasmic reticulum to Golgi vesicle-mediated transport"/>
    <property type="evidence" value="ECO:0000315"/>
    <property type="project" value="SGD"/>
</dbReference>
<dbReference type="GO" id="GO:0015031">
    <property type="term" value="P:protein transport"/>
    <property type="evidence" value="ECO:0007669"/>
    <property type="project" value="UniProtKB-KW"/>
</dbReference>
<dbReference type="InterPro" id="IPR013880">
    <property type="entry name" value="Yos1"/>
</dbReference>
<dbReference type="PANTHER" id="PTHR15858">
    <property type="entry name" value="IMMEDIATE EARLY RESPONSE 3-INTERACTING PROTEIN 1"/>
    <property type="match status" value="1"/>
</dbReference>
<dbReference type="PANTHER" id="PTHR15858:SF0">
    <property type="entry name" value="IMMEDIATE EARLY RESPONSE 3-INTERACTING PROTEIN 1"/>
    <property type="match status" value="1"/>
</dbReference>
<dbReference type="Pfam" id="PF08571">
    <property type="entry name" value="Yos1"/>
    <property type="match status" value="1"/>
</dbReference>
<proteinExistence type="evidence at protein level"/>
<gene>
    <name type="primary">YOS1</name>
    <name type="ordered locus">YER074W-A</name>
</gene>
<accession>Q3E834</accession>
<accession>D3DLY0</accession>
<name>YOS1_YEAST</name>
<reference key="1">
    <citation type="journal article" date="1997" name="Nature">
        <title>The nucleotide sequence of Saccharomyces cerevisiae chromosome V.</title>
        <authorList>
            <person name="Dietrich F.S."/>
            <person name="Mulligan J.T."/>
            <person name="Hennessy K.M."/>
            <person name="Yelton M.A."/>
            <person name="Allen E."/>
            <person name="Araujo R."/>
            <person name="Aviles E."/>
            <person name="Berno A."/>
            <person name="Brennan T."/>
            <person name="Carpenter J."/>
            <person name="Chen E."/>
            <person name="Cherry J.M."/>
            <person name="Chung E."/>
            <person name="Duncan M."/>
            <person name="Guzman E."/>
            <person name="Hartzell G."/>
            <person name="Hunicke-Smith S."/>
            <person name="Hyman R.W."/>
            <person name="Kayser A."/>
            <person name="Komp C."/>
            <person name="Lashkari D."/>
            <person name="Lew H."/>
            <person name="Lin D."/>
            <person name="Mosedale D."/>
            <person name="Nakahara K."/>
            <person name="Namath A."/>
            <person name="Norgren R."/>
            <person name="Oefner P."/>
            <person name="Oh C."/>
            <person name="Petel F.X."/>
            <person name="Roberts D."/>
            <person name="Sehl P."/>
            <person name="Schramm S."/>
            <person name="Shogren T."/>
            <person name="Smith V."/>
            <person name="Taylor P."/>
            <person name="Wei Y."/>
            <person name="Botstein D."/>
            <person name="Davis R.W."/>
        </authorList>
    </citation>
    <scope>NUCLEOTIDE SEQUENCE [LARGE SCALE GENOMIC DNA]</scope>
    <source>
        <strain>ATCC 204508 / S288c</strain>
    </source>
</reference>
<reference key="2">
    <citation type="journal article" date="2014" name="G3 (Bethesda)">
        <title>The reference genome sequence of Saccharomyces cerevisiae: Then and now.</title>
        <authorList>
            <person name="Engel S.R."/>
            <person name="Dietrich F.S."/>
            <person name="Fisk D.G."/>
            <person name="Binkley G."/>
            <person name="Balakrishnan R."/>
            <person name="Costanzo M.C."/>
            <person name="Dwight S.S."/>
            <person name="Hitz B.C."/>
            <person name="Karra K."/>
            <person name="Nash R.S."/>
            <person name="Weng S."/>
            <person name="Wong E.D."/>
            <person name="Lloyd P."/>
            <person name="Skrzypek M.S."/>
            <person name="Miyasato S.R."/>
            <person name="Simison M."/>
            <person name="Cherry J.M."/>
        </authorList>
    </citation>
    <scope>GENOME REANNOTATION</scope>
    <source>
        <strain>ATCC 204508 / S288c</strain>
    </source>
</reference>
<reference key="3">
    <citation type="journal article" date="2005" name="Mol. Biol. Cell">
        <title>Yos1p is a novel subunit of the Yip1p-Yif1p complex and is required for transport between the endoplasmic reticulum and the Golgi complex.</title>
        <authorList>
            <person name="Heidtman M."/>
            <person name="Chen C.Z."/>
            <person name="Collins R.N."/>
            <person name="Barlowe C."/>
        </authorList>
    </citation>
    <scope>FUNCTION</scope>
    <scope>INTERACTION WITH YIF1 AND YIP1</scope>
    <scope>SUBCELLULAR LOCATION</scope>
    <scope>MUTAGENESIS OF ASN-18 AND PRO-69</scope>
</reference>
<comment type="function">
    <text evidence="2">Required for protein transport between endoplasmic reticulum and Golgi apparatus.</text>
</comment>
<comment type="subunit">
    <text>Component of the YIP1-YIF1 complex, composed of at least YIF1, YIP1 and YOS1.</text>
</comment>
<comment type="subcellular location">
    <subcellularLocation>
        <location evidence="2">Endoplasmic reticulum membrane</location>
        <topology evidence="2">Multi-pass membrane protein</topology>
    </subcellularLocation>
    <subcellularLocation>
        <location evidence="2">Golgi apparatus membrane</location>
        <topology evidence="2">Multi-pass membrane protein</topology>
    </subcellularLocation>
</comment>
<comment type="similarity">
    <text evidence="3">Belongs to the YOS1 family.</text>
</comment>
<evidence type="ECO:0000255" key="1"/>
<evidence type="ECO:0000269" key="2">
    <source>
    </source>
</evidence>
<evidence type="ECO:0000305" key="3"/>
<protein>
    <recommendedName>
        <fullName>Protein transport protein YOS1</fullName>
    </recommendedName>
    <alternativeName>
        <fullName>YIP one suppressor protein 1</fullName>
    </alternativeName>
</protein>
<sequence length="85" mass="9436">MVLFGLGRLFYVILLLINAVAVLSEERFLRRIGLGRSNDETPVFGQDQNTTKSKVVQLIGAVQTLLRIPLIGINILVIVYELLLG</sequence>